<accession>B9K8U1</accession>
<sequence>MNVAILLAAGKGERLGEKVPKQFLEVEGRMLFEYPLKALLDSNVIDAVVIVVSRDWMDRVVEKVKHEKILGIVEGGKTRSQSVRNALKFLENIKPSYVLVHDAARPFLRKKHIEEVLKKAQETGAATLALKNSDTLIRLDDSRIEYVPREGIYRVQTPQAFSYDLLKRAHSEEKEWADDTEPVHRLGVKISVVEGDLFCFKVTFKSDLELARLIAKEWERIA</sequence>
<gene>
    <name evidence="1" type="primary">ispD</name>
    <name type="ordered locus">CTN_1198</name>
</gene>
<dbReference type="EC" id="2.7.7.60" evidence="1"/>
<dbReference type="EMBL" id="CP000916">
    <property type="protein sequence ID" value="ACM23374.1"/>
    <property type="molecule type" value="Genomic_DNA"/>
</dbReference>
<dbReference type="RefSeq" id="WP_015919689.1">
    <property type="nucleotide sequence ID" value="NC_011978.1"/>
</dbReference>
<dbReference type="SMR" id="B9K8U1"/>
<dbReference type="STRING" id="309803.CTN_1198"/>
<dbReference type="KEGG" id="tna:CTN_1198"/>
<dbReference type="eggNOG" id="COG1211">
    <property type="taxonomic scope" value="Bacteria"/>
</dbReference>
<dbReference type="HOGENOM" id="CLU_061281_2_2_0"/>
<dbReference type="UniPathway" id="UPA00056">
    <property type="reaction ID" value="UER00093"/>
</dbReference>
<dbReference type="Proteomes" id="UP000000445">
    <property type="component" value="Chromosome"/>
</dbReference>
<dbReference type="GO" id="GO:0005829">
    <property type="term" value="C:cytosol"/>
    <property type="evidence" value="ECO:0007669"/>
    <property type="project" value="TreeGrafter"/>
</dbReference>
<dbReference type="GO" id="GO:0050518">
    <property type="term" value="F:2-C-methyl-D-erythritol 4-phosphate cytidylyltransferase activity"/>
    <property type="evidence" value="ECO:0007669"/>
    <property type="project" value="UniProtKB-UniRule"/>
</dbReference>
<dbReference type="GO" id="GO:0019288">
    <property type="term" value="P:isopentenyl diphosphate biosynthetic process, methylerythritol 4-phosphate pathway"/>
    <property type="evidence" value="ECO:0007669"/>
    <property type="project" value="UniProtKB-UniRule"/>
</dbReference>
<dbReference type="CDD" id="cd02516">
    <property type="entry name" value="CDP-ME_synthetase"/>
    <property type="match status" value="1"/>
</dbReference>
<dbReference type="FunFam" id="3.90.550.10:FF:000003">
    <property type="entry name" value="2-C-methyl-D-erythritol 4-phosphate cytidylyltransferase"/>
    <property type="match status" value="1"/>
</dbReference>
<dbReference type="Gene3D" id="3.90.550.10">
    <property type="entry name" value="Spore Coat Polysaccharide Biosynthesis Protein SpsA, Chain A"/>
    <property type="match status" value="1"/>
</dbReference>
<dbReference type="HAMAP" id="MF_00108">
    <property type="entry name" value="IspD"/>
    <property type="match status" value="1"/>
</dbReference>
<dbReference type="InterPro" id="IPR001228">
    <property type="entry name" value="IspD"/>
</dbReference>
<dbReference type="InterPro" id="IPR034683">
    <property type="entry name" value="IspD/TarI"/>
</dbReference>
<dbReference type="InterPro" id="IPR018294">
    <property type="entry name" value="ISPD_synthase_CS"/>
</dbReference>
<dbReference type="InterPro" id="IPR029044">
    <property type="entry name" value="Nucleotide-diphossugar_trans"/>
</dbReference>
<dbReference type="NCBIfam" id="TIGR00453">
    <property type="entry name" value="ispD"/>
    <property type="match status" value="1"/>
</dbReference>
<dbReference type="PANTHER" id="PTHR43015">
    <property type="entry name" value="D-RIBITOL-5-PHOSPHATE CYTIDYLYLTRANSFERASE"/>
    <property type="match status" value="1"/>
</dbReference>
<dbReference type="PANTHER" id="PTHR43015:SF1">
    <property type="entry name" value="D-RIBITOL-5-PHOSPHATE CYTIDYLYLTRANSFERASE"/>
    <property type="match status" value="1"/>
</dbReference>
<dbReference type="Pfam" id="PF01128">
    <property type="entry name" value="IspD"/>
    <property type="match status" value="1"/>
</dbReference>
<dbReference type="SUPFAM" id="SSF53448">
    <property type="entry name" value="Nucleotide-diphospho-sugar transferases"/>
    <property type="match status" value="1"/>
</dbReference>
<dbReference type="PROSITE" id="PS01295">
    <property type="entry name" value="ISPD"/>
    <property type="match status" value="1"/>
</dbReference>
<organism>
    <name type="scientific">Thermotoga neapolitana (strain ATCC 49049 / DSM 4359 / NBRC 107923 / NS-E)</name>
    <dbReference type="NCBI Taxonomy" id="309803"/>
    <lineage>
        <taxon>Bacteria</taxon>
        <taxon>Thermotogati</taxon>
        <taxon>Thermotogota</taxon>
        <taxon>Thermotogae</taxon>
        <taxon>Thermotogales</taxon>
        <taxon>Thermotogaceae</taxon>
        <taxon>Thermotoga</taxon>
    </lineage>
</organism>
<keyword id="KW-0414">Isoprene biosynthesis</keyword>
<keyword id="KW-0548">Nucleotidyltransferase</keyword>
<keyword id="KW-0808">Transferase</keyword>
<comment type="function">
    <text evidence="1">Catalyzes the formation of 4-diphosphocytidyl-2-C-methyl-D-erythritol from CTP and 2-C-methyl-D-erythritol 4-phosphate (MEP).</text>
</comment>
<comment type="catalytic activity">
    <reaction evidence="1">
        <text>2-C-methyl-D-erythritol 4-phosphate + CTP + H(+) = 4-CDP-2-C-methyl-D-erythritol + diphosphate</text>
        <dbReference type="Rhea" id="RHEA:13429"/>
        <dbReference type="ChEBI" id="CHEBI:15378"/>
        <dbReference type="ChEBI" id="CHEBI:33019"/>
        <dbReference type="ChEBI" id="CHEBI:37563"/>
        <dbReference type="ChEBI" id="CHEBI:57823"/>
        <dbReference type="ChEBI" id="CHEBI:58262"/>
        <dbReference type="EC" id="2.7.7.60"/>
    </reaction>
</comment>
<comment type="pathway">
    <text evidence="1">Isoprenoid biosynthesis; isopentenyl diphosphate biosynthesis via DXP pathway; isopentenyl diphosphate from 1-deoxy-D-xylulose 5-phosphate: step 2/6.</text>
</comment>
<comment type="similarity">
    <text evidence="1">Belongs to the IspD/TarI cytidylyltransferase family. IspD subfamily.</text>
</comment>
<proteinExistence type="inferred from homology"/>
<reference key="1">
    <citation type="submission" date="2007-11" db="EMBL/GenBank/DDBJ databases">
        <title>The genome sequence of the hyperthermophilic bacterium Thermotoga neapolitana.</title>
        <authorList>
            <person name="Lim S.K."/>
            <person name="Kim J.S."/>
            <person name="Cha S.H."/>
            <person name="Park B.C."/>
            <person name="Lee D.S."/>
            <person name="Tae H.S."/>
            <person name="Kim S.-J."/>
            <person name="Kim J.J."/>
            <person name="Park K.J."/>
            <person name="Lee S.Y."/>
        </authorList>
    </citation>
    <scope>NUCLEOTIDE SEQUENCE [LARGE SCALE GENOMIC DNA]</scope>
    <source>
        <strain>ATCC 49049 / DSM 4359 / NBRC 107923 / NS-E</strain>
    </source>
</reference>
<protein>
    <recommendedName>
        <fullName evidence="1">2-C-methyl-D-erythritol 4-phosphate cytidylyltransferase</fullName>
        <ecNumber evidence="1">2.7.7.60</ecNumber>
    </recommendedName>
    <alternativeName>
        <fullName evidence="1">4-diphosphocytidyl-2C-methyl-D-erythritol synthase</fullName>
    </alternativeName>
    <alternativeName>
        <fullName evidence="1">MEP cytidylyltransferase</fullName>
        <shortName evidence="1">MCT</shortName>
    </alternativeName>
</protein>
<feature type="chain" id="PRO_1000119041" description="2-C-methyl-D-erythritol 4-phosphate cytidylyltransferase">
    <location>
        <begin position="1"/>
        <end position="222"/>
    </location>
</feature>
<feature type="site" description="Transition state stabilizer" evidence="1">
    <location>
        <position position="14"/>
    </location>
</feature>
<feature type="site" description="Transition state stabilizer" evidence="1">
    <location>
        <position position="21"/>
    </location>
</feature>
<feature type="site" description="Positions MEP for the nucleophilic attack" evidence="1">
    <location>
        <position position="149"/>
    </location>
</feature>
<feature type="site" description="Positions MEP for the nucleophilic attack" evidence="1">
    <location>
        <position position="201"/>
    </location>
</feature>
<name>ISPD_THENN</name>
<evidence type="ECO:0000255" key="1">
    <source>
        <dbReference type="HAMAP-Rule" id="MF_00108"/>
    </source>
</evidence>